<sequence length="366" mass="41982">MAPSGSGGVRRRCRRVLYWIPVVFISLLLGWSYYAYAIQLCIVSMENIGEQVVCLMAYHLLFAMFVWSYWKTIFTLPMNPSKEFHLSYAEKELLEREPRGEAHQEVLRRAAKDLPIYTRTMSGAIRYCDRCQLIKPDRCHHCSVCDKCILKMDHHCPWVNNCVGFSNYKFFLLFLAYSLLYCLFIAATDLQYFIRFWTNGLPDTQAKFHIMFLFFAAAMFSVSLSSLFGYHCWLVSKNKSTLEAFRNPVFRHGTDKNGFSLGFSKNMRQVFGDEKKYWLLPVFSSQGDGCSFPTCLVNQDPEQPSTPAGLNSTVKNPENHQFPAKPLRESQSHLLKDSQTWTESSANPGKGKAGMSNPALTMENET</sequence>
<feature type="chain" id="PRO_0000212860" description="Palmitoyltransferase ZDHHC2">
    <location>
        <begin position="1"/>
        <end position="366"/>
    </location>
</feature>
<feature type="topological domain" description="Cytoplasmic" evidence="14">
    <location>
        <begin position="1"/>
        <end position="15"/>
    </location>
</feature>
<feature type="transmembrane region" description="Helical" evidence="4">
    <location>
        <begin position="16"/>
        <end position="36"/>
    </location>
</feature>
<feature type="topological domain" description="Lumenal" evidence="14">
    <location>
        <begin position="37"/>
        <end position="47"/>
    </location>
</feature>
<feature type="transmembrane region" description="Helical" evidence="4">
    <location>
        <begin position="48"/>
        <end position="68"/>
    </location>
</feature>
<feature type="topological domain" description="Cytoplasmic" evidence="14">
    <location>
        <begin position="69"/>
        <end position="169"/>
    </location>
</feature>
<feature type="transmembrane region" description="Helical" evidence="4">
    <location>
        <begin position="170"/>
        <end position="190"/>
    </location>
</feature>
<feature type="topological domain" description="Lumenal" evidence="9">
    <location>
        <begin position="191"/>
        <end position="207"/>
    </location>
</feature>
<feature type="transmembrane region" description="Helical" evidence="4">
    <location>
        <begin position="208"/>
        <end position="228"/>
    </location>
</feature>
<feature type="topological domain" description="Cytoplasmic" evidence="14">
    <location>
        <begin position="229"/>
        <end position="366"/>
    </location>
</feature>
<feature type="domain" description="DHHC" evidence="5">
    <location>
        <begin position="126"/>
        <end position="176"/>
    </location>
</feature>
<feature type="region of interest" description="Disordered" evidence="6">
    <location>
        <begin position="297"/>
        <end position="366"/>
    </location>
</feature>
<feature type="region of interest" description="Mediates localization to plasma membrane and recycling endosomes" evidence="9">
    <location>
        <begin position="298"/>
        <end position="366"/>
    </location>
</feature>
<feature type="short sequence motif" description="Non-canonical dileucine endocytic signal" evidence="12">
    <location>
        <begin position="334"/>
        <end position="335"/>
    </location>
</feature>
<feature type="short sequence motif" description="NPxY-like endocytic signal" evidence="12">
    <location>
        <begin position="357"/>
        <end position="360"/>
    </location>
</feature>
<feature type="compositionally biased region" description="Polar residues" evidence="6">
    <location>
        <begin position="297"/>
        <end position="316"/>
    </location>
</feature>
<feature type="compositionally biased region" description="Basic and acidic residues" evidence="6">
    <location>
        <begin position="326"/>
        <end position="336"/>
    </location>
</feature>
<feature type="compositionally biased region" description="Polar residues" evidence="6">
    <location>
        <begin position="337"/>
        <end position="347"/>
    </location>
</feature>
<feature type="active site" description="S-palmitoyl cysteine intermediate" evidence="5 11">
    <location>
        <position position="156"/>
    </location>
</feature>
<feature type="mutagenesis site" description="No effect on subcellular localization." evidence="9">
    <original>C</original>
    <variation>A</variation>
    <location>
        <position position="156"/>
    </location>
</feature>
<feature type="mutagenesis site" description="Loss of protein-cysteine S-palmitoyltransferase activity. Loss of autopalmitoylation." evidence="11">
    <original>C</original>
    <variation>S</variation>
    <location>
        <position position="156"/>
    </location>
</feature>
<feature type="mutagenesis site" description="Increased localization to the plasma membrane." evidence="12">
    <original>S</original>
    <variation>A</variation>
    <location>
        <position position="330"/>
    </location>
</feature>
<feature type="mutagenesis site" description="No effect on subcellular localization." evidence="12">
    <original>S</original>
    <variation>D</variation>
    <location>
        <position position="330"/>
    </location>
</feature>
<feature type="mutagenesis site" description="Increased localization to the plasma membrane." evidence="12">
    <original>LL</original>
    <variation>AA</variation>
    <location>
        <begin position="334"/>
        <end position="335"/>
    </location>
</feature>
<feature type="mutagenesis site" description="Decreased localization to the plasma membrane." evidence="12">
    <original>TWT</original>
    <variation>AWA</variation>
    <location>
        <begin position="340"/>
        <end position="342"/>
    </location>
</feature>
<feature type="mutagenesis site" description="Decreased localization to the plasma membrane." evidence="12">
    <original>SS</original>
    <variation>DD</variation>
    <location>
        <begin position="344"/>
        <end position="345"/>
    </location>
</feature>
<feature type="mutagenesis site" description="No effect on subcellular localization." evidence="12">
    <original>S</original>
    <variation>A</variation>
    <location>
        <position position="356"/>
    </location>
</feature>
<feature type="mutagenesis site" description="Loss of localization to the plasma membrane." evidence="12">
    <original>S</original>
    <variation>D</variation>
    <location>
        <position position="356"/>
    </location>
</feature>
<feature type="mutagenesis site" description="Increased localization to the plasma membrane." evidence="12">
    <original>N</original>
    <variation>A</variation>
    <location>
        <position position="357"/>
    </location>
</feature>
<feature type="mutagenesis site" description="Increased localization to the plasma membrane." evidence="12">
    <original>P</original>
    <variation>A</variation>
    <location>
        <position position="358"/>
    </location>
</feature>
<feature type="mutagenesis site" description="No effect on subcellular localization." evidence="12">
    <original>T</original>
    <variation>A</variation>
    <location>
        <position position="361"/>
    </location>
</feature>
<feature type="mutagenesis site" description="Loss of localization to the plasma membrane." evidence="12">
    <original>T</original>
    <variation>E</variation>
    <location>
        <position position="361"/>
    </location>
</feature>
<gene>
    <name evidence="16" type="primary">Zdhhc2</name>
</gene>
<evidence type="ECO:0000250" key="1">
    <source>
        <dbReference type="UniProtKB" id="Q8IUH5"/>
    </source>
</evidence>
<evidence type="ECO:0000250" key="2">
    <source>
        <dbReference type="UniProtKB" id="Q9JKR5"/>
    </source>
</evidence>
<evidence type="ECO:0000250" key="3">
    <source>
        <dbReference type="UniProtKB" id="Q9UIJ5"/>
    </source>
</evidence>
<evidence type="ECO:0000255" key="4"/>
<evidence type="ECO:0000255" key="5">
    <source>
        <dbReference type="PROSITE-ProRule" id="PRU00067"/>
    </source>
</evidence>
<evidence type="ECO:0000256" key="6">
    <source>
        <dbReference type="SAM" id="MobiDB-lite"/>
    </source>
</evidence>
<evidence type="ECO:0000269" key="7">
    <source>
    </source>
</evidence>
<evidence type="ECO:0000269" key="8">
    <source>
    </source>
</evidence>
<evidence type="ECO:0000269" key="9">
    <source>
    </source>
</evidence>
<evidence type="ECO:0000269" key="10">
    <source>
    </source>
</evidence>
<evidence type="ECO:0000269" key="11">
    <source>
    </source>
</evidence>
<evidence type="ECO:0000269" key="12">
    <source>
    </source>
</evidence>
<evidence type="ECO:0000305" key="13"/>
<evidence type="ECO:0000305" key="14">
    <source>
    </source>
</evidence>
<evidence type="ECO:0000305" key="15">
    <source>
    </source>
</evidence>
<evidence type="ECO:0000312" key="16">
    <source>
        <dbReference type="MGI" id="MGI:1923452"/>
    </source>
</evidence>
<comment type="function">
    <text evidence="3 7 8 10 15">Palmitoyltransferase that catalyzes the addition of palmitate onto various protein substrates and is involved in a variety of cellular processes (PubMed:15603741). Has no stringent fatty acid selectivity and in addition to palmitate can also transfer onto target proteins myristate from tetradecanoyl-CoA and stearate from octadecanoyl-CoA (Probable). In the nervous system, plays a role in long term synaptic potentiation by palmitoylating AKAP5 through which it regulates protein trafficking from the dendritic recycling endosomes to the plasma membrane and controls both structural and functional plasticity at excitatory synapses (PubMed:25589740). In dendrites, mediates the palmitoylation of DLG4 when synaptic activity decreases and induces synaptic clustering of DLG4 and associated AMPA-type glutamate receptors (PubMed:15603741). Also mediates the de novo and turnover palmitoylation of RGS7BP, a shuttle for Gi/o-specific GTPase-activating proteins/GAPs, promoting its localization to the plasma membrane in response to the activation of G protein-coupled receptors. Through the localization of these GTPase-activating proteins/GAPs, it also probably plays a role in G protein-coupled receptors signaling in neurons (PubMed:21343290). Also probably plays a role in cell adhesion by palmitoylating CD9 and CD151 to regulate their expression and function. Palmitoylates the endoplasmic reticulum protein CKAP4 and regulates its localization to the plasma membrane. Could also palmitoylate LCK and regulate its localization to the plasma membrane (By similarity).</text>
</comment>
<comment type="catalytic activity">
    <reaction evidence="15">
        <text>L-cysteinyl-[protein] + hexadecanoyl-CoA = S-hexadecanoyl-L-cysteinyl-[protein] + CoA</text>
        <dbReference type="Rhea" id="RHEA:36683"/>
        <dbReference type="Rhea" id="RHEA-COMP:10131"/>
        <dbReference type="Rhea" id="RHEA-COMP:11032"/>
        <dbReference type="ChEBI" id="CHEBI:29950"/>
        <dbReference type="ChEBI" id="CHEBI:57287"/>
        <dbReference type="ChEBI" id="CHEBI:57379"/>
        <dbReference type="ChEBI" id="CHEBI:74151"/>
        <dbReference type="EC" id="2.3.1.225"/>
    </reaction>
    <physiologicalReaction direction="left-to-right" evidence="15">
        <dbReference type="Rhea" id="RHEA:36684"/>
    </physiologicalReaction>
</comment>
<comment type="catalytic activity">
    <reaction evidence="15">
        <text>L-cysteinyl-[protein] + tetradecanoyl-CoA = S-tetradecanoyl-L-cysteinyl-[protein] + CoA</text>
        <dbReference type="Rhea" id="RHEA:59736"/>
        <dbReference type="Rhea" id="RHEA-COMP:10131"/>
        <dbReference type="Rhea" id="RHEA-COMP:15433"/>
        <dbReference type="ChEBI" id="CHEBI:29950"/>
        <dbReference type="ChEBI" id="CHEBI:57287"/>
        <dbReference type="ChEBI" id="CHEBI:57385"/>
        <dbReference type="ChEBI" id="CHEBI:143199"/>
    </reaction>
    <physiologicalReaction direction="left-to-right" evidence="15">
        <dbReference type="Rhea" id="RHEA:59737"/>
    </physiologicalReaction>
</comment>
<comment type="catalytic activity">
    <reaction evidence="15">
        <text>L-cysteinyl-[protein] + octadecanoyl-CoA = S-octadecanoyl-L-cysteinyl-[protein] + CoA</text>
        <dbReference type="Rhea" id="RHEA:59740"/>
        <dbReference type="Rhea" id="RHEA-COMP:10131"/>
        <dbReference type="Rhea" id="RHEA-COMP:15434"/>
        <dbReference type="ChEBI" id="CHEBI:29950"/>
        <dbReference type="ChEBI" id="CHEBI:57287"/>
        <dbReference type="ChEBI" id="CHEBI:57394"/>
        <dbReference type="ChEBI" id="CHEBI:143200"/>
    </reaction>
    <physiologicalReaction direction="left-to-right" evidence="15">
        <dbReference type="Rhea" id="RHEA:59741"/>
    </physiologicalReaction>
</comment>
<comment type="subunit">
    <text evidence="3">Monomer. Homodimer. The monomeric form has a higher catalytic activity.</text>
</comment>
<comment type="subcellular location">
    <subcellularLocation>
        <location evidence="2">Postsynaptic density</location>
    </subcellularLocation>
    <subcellularLocation>
        <location evidence="10 12">Postsynaptic recycling endosome membrane</location>
        <topology evidence="14">Multi-pass membrane protein</topology>
    </subcellularLocation>
    <subcellularLocation>
        <location evidence="8 9 12">Cell membrane</location>
        <topology evidence="14">Multi-pass membrane protein</topology>
    </subcellularLocation>
    <subcellularLocation>
        <location evidence="3">Endoplasmic reticulum membrane</location>
        <topology evidence="14">Multi-pass membrane protein</topology>
    </subcellularLocation>
    <subcellularLocation>
        <location evidence="3">Golgi apparatus membrane</location>
        <topology evidence="14">Multi-pass membrane protein</topology>
    </subcellularLocation>
    <text evidence="2">Translocates to postsynaptic density when synaptic activity decreases.</text>
</comment>
<comment type="tissue specificity">
    <text evidence="7 8">Expressed in all brain regions.</text>
</comment>
<comment type="domain">
    <text evidence="1">The DHHC domain is required for palmitoyltransferase activity.</text>
</comment>
<comment type="PTM">
    <text evidence="3">Autopalmitoylated.</text>
</comment>
<comment type="similarity">
    <text evidence="13">Belongs to the DHHC palmitoyltransferase family.</text>
</comment>
<reference key="1">
    <citation type="journal article" date="2005" name="Science">
        <title>The transcriptional landscape of the mammalian genome.</title>
        <authorList>
            <person name="Carninci P."/>
            <person name="Kasukawa T."/>
            <person name="Katayama S."/>
            <person name="Gough J."/>
            <person name="Frith M.C."/>
            <person name="Maeda N."/>
            <person name="Oyama R."/>
            <person name="Ravasi T."/>
            <person name="Lenhard B."/>
            <person name="Wells C."/>
            <person name="Kodzius R."/>
            <person name="Shimokawa K."/>
            <person name="Bajic V.B."/>
            <person name="Brenner S.E."/>
            <person name="Batalov S."/>
            <person name="Forrest A.R."/>
            <person name="Zavolan M."/>
            <person name="Davis M.J."/>
            <person name="Wilming L.G."/>
            <person name="Aidinis V."/>
            <person name="Allen J.E."/>
            <person name="Ambesi-Impiombato A."/>
            <person name="Apweiler R."/>
            <person name="Aturaliya R.N."/>
            <person name="Bailey T.L."/>
            <person name="Bansal M."/>
            <person name="Baxter L."/>
            <person name="Beisel K.W."/>
            <person name="Bersano T."/>
            <person name="Bono H."/>
            <person name="Chalk A.M."/>
            <person name="Chiu K.P."/>
            <person name="Choudhary V."/>
            <person name="Christoffels A."/>
            <person name="Clutterbuck D.R."/>
            <person name="Crowe M.L."/>
            <person name="Dalla E."/>
            <person name="Dalrymple B.P."/>
            <person name="de Bono B."/>
            <person name="Della Gatta G."/>
            <person name="di Bernardo D."/>
            <person name="Down T."/>
            <person name="Engstrom P."/>
            <person name="Fagiolini M."/>
            <person name="Faulkner G."/>
            <person name="Fletcher C.F."/>
            <person name="Fukushima T."/>
            <person name="Furuno M."/>
            <person name="Futaki S."/>
            <person name="Gariboldi M."/>
            <person name="Georgii-Hemming P."/>
            <person name="Gingeras T.R."/>
            <person name="Gojobori T."/>
            <person name="Green R.E."/>
            <person name="Gustincich S."/>
            <person name="Harbers M."/>
            <person name="Hayashi Y."/>
            <person name="Hensch T.K."/>
            <person name="Hirokawa N."/>
            <person name="Hill D."/>
            <person name="Huminiecki L."/>
            <person name="Iacono M."/>
            <person name="Ikeo K."/>
            <person name="Iwama A."/>
            <person name="Ishikawa T."/>
            <person name="Jakt M."/>
            <person name="Kanapin A."/>
            <person name="Katoh M."/>
            <person name="Kawasawa Y."/>
            <person name="Kelso J."/>
            <person name="Kitamura H."/>
            <person name="Kitano H."/>
            <person name="Kollias G."/>
            <person name="Krishnan S.P."/>
            <person name="Kruger A."/>
            <person name="Kummerfeld S.K."/>
            <person name="Kurochkin I.V."/>
            <person name="Lareau L.F."/>
            <person name="Lazarevic D."/>
            <person name="Lipovich L."/>
            <person name="Liu J."/>
            <person name="Liuni S."/>
            <person name="McWilliam S."/>
            <person name="Madan Babu M."/>
            <person name="Madera M."/>
            <person name="Marchionni L."/>
            <person name="Matsuda H."/>
            <person name="Matsuzawa S."/>
            <person name="Miki H."/>
            <person name="Mignone F."/>
            <person name="Miyake S."/>
            <person name="Morris K."/>
            <person name="Mottagui-Tabar S."/>
            <person name="Mulder N."/>
            <person name="Nakano N."/>
            <person name="Nakauchi H."/>
            <person name="Ng P."/>
            <person name="Nilsson R."/>
            <person name="Nishiguchi S."/>
            <person name="Nishikawa S."/>
            <person name="Nori F."/>
            <person name="Ohara O."/>
            <person name="Okazaki Y."/>
            <person name="Orlando V."/>
            <person name="Pang K.C."/>
            <person name="Pavan W.J."/>
            <person name="Pavesi G."/>
            <person name="Pesole G."/>
            <person name="Petrovsky N."/>
            <person name="Piazza S."/>
            <person name="Reed J."/>
            <person name="Reid J.F."/>
            <person name="Ring B.Z."/>
            <person name="Ringwald M."/>
            <person name="Rost B."/>
            <person name="Ruan Y."/>
            <person name="Salzberg S.L."/>
            <person name="Sandelin A."/>
            <person name="Schneider C."/>
            <person name="Schoenbach C."/>
            <person name="Sekiguchi K."/>
            <person name="Semple C.A."/>
            <person name="Seno S."/>
            <person name="Sessa L."/>
            <person name="Sheng Y."/>
            <person name="Shibata Y."/>
            <person name="Shimada H."/>
            <person name="Shimada K."/>
            <person name="Silva D."/>
            <person name="Sinclair B."/>
            <person name="Sperling S."/>
            <person name="Stupka E."/>
            <person name="Sugiura K."/>
            <person name="Sultana R."/>
            <person name="Takenaka Y."/>
            <person name="Taki K."/>
            <person name="Tammoja K."/>
            <person name="Tan S.L."/>
            <person name="Tang S."/>
            <person name="Taylor M.S."/>
            <person name="Tegner J."/>
            <person name="Teichmann S.A."/>
            <person name="Ueda H.R."/>
            <person name="van Nimwegen E."/>
            <person name="Verardo R."/>
            <person name="Wei C.L."/>
            <person name="Yagi K."/>
            <person name="Yamanishi H."/>
            <person name="Zabarovsky E."/>
            <person name="Zhu S."/>
            <person name="Zimmer A."/>
            <person name="Hide W."/>
            <person name="Bult C."/>
            <person name="Grimmond S.M."/>
            <person name="Teasdale R.D."/>
            <person name="Liu E.T."/>
            <person name="Brusic V."/>
            <person name="Quackenbush J."/>
            <person name="Wahlestedt C."/>
            <person name="Mattick J.S."/>
            <person name="Hume D.A."/>
            <person name="Kai C."/>
            <person name="Sasaki D."/>
            <person name="Tomaru Y."/>
            <person name="Fukuda S."/>
            <person name="Kanamori-Katayama M."/>
            <person name="Suzuki M."/>
            <person name="Aoki J."/>
            <person name="Arakawa T."/>
            <person name="Iida J."/>
            <person name="Imamura K."/>
            <person name="Itoh M."/>
            <person name="Kato T."/>
            <person name="Kawaji H."/>
            <person name="Kawagashira N."/>
            <person name="Kawashima T."/>
            <person name="Kojima M."/>
            <person name="Kondo S."/>
            <person name="Konno H."/>
            <person name="Nakano K."/>
            <person name="Ninomiya N."/>
            <person name="Nishio T."/>
            <person name="Okada M."/>
            <person name="Plessy C."/>
            <person name="Shibata K."/>
            <person name="Shiraki T."/>
            <person name="Suzuki S."/>
            <person name="Tagami M."/>
            <person name="Waki K."/>
            <person name="Watahiki A."/>
            <person name="Okamura-Oho Y."/>
            <person name="Suzuki H."/>
            <person name="Kawai J."/>
            <person name="Hayashizaki Y."/>
        </authorList>
    </citation>
    <scope>NUCLEOTIDE SEQUENCE [LARGE SCALE MRNA]</scope>
    <source>
        <strain>C57BL/6J</strain>
        <tissue>Head</tissue>
    </source>
</reference>
<reference key="2">
    <citation type="journal article" date="2004" name="Neuron">
        <title>Identification of PSD-95 palmitoylating enzymes.</title>
        <authorList>
            <person name="Fukata M."/>
            <person name="Fukata Y."/>
            <person name="Adesnik H."/>
            <person name="Nicoll R.A."/>
            <person name="Bredt D.S."/>
        </authorList>
    </citation>
    <scope>FUNCTION</scope>
    <scope>TISSUE SPECIFICITY</scope>
</reference>
<reference key="3">
    <citation type="journal article" date="2011" name="J. Biol. Chem.">
        <title>Gi/o signaling and the palmitoyltransferase DHHC2 regulate palmitate cycling and shuttling of RGS7 family-binding protein.</title>
        <authorList>
            <person name="Jia L."/>
            <person name="Linder M.E."/>
            <person name="Blumer K.J."/>
        </authorList>
    </citation>
    <scope>FUNCTION</scope>
    <scope>SUBCELLULAR LOCATION</scope>
    <scope>TISSUE SPECIFICITY</scope>
</reference>
<reference key="4">
    <citation type="journal article" date="2011" name="Mol. Biol. Cell">
        <title>The palmitoyl transferase DHHC2 targets a dynamic membrane cycling pathway: regulation by a C-terminal domain.</title>
        <authorList>
            <person name="Greaves J."/>
            <person name="Carmichael J.A."/>
            <person name="Chamberlain L.H."/>
        </authorList>
    </citation>
    <scope>SUBCELLULAR LOCATION</scope>
    <scope>TOPOLOGY</scope>
    <scope>MUTAGENESIS OF CYS-156</scope>
    <scope>REGION</scope>
</reference>
<reference key="5">
    <citation type="journal article" date="2015" name="J. Neurosci.">
        <title>The palmitoyl acyltransferase DHHC2 regulates recycling endosome exocytosis and synaptic potentiation through palmitoylation of AKAP79/150.</title>
        <authorList>
            <person name="Woolfrey K.M."/>
            <person name="Sanderson J.L."/>
            <person name="Dell'Acqua M.L."/>
        </authorList>
    </citation>
    <scope>FUNCTION</scope>
    <scope>SUBCELLULAR LOCATION</scope>
</reference>
<reference key="6">
    <citation type="journal article" date="2017" name="Mol. Cell. Neurosci.">
        <title>The C-terminal domain of zDHHC2 contains distinct sorting signals that regulate intracellular localisation in neurons and neuroendocrine cells.</title>
        <authorList>
            <person name="Salaun C."/>
            <person name="Ritchie L."/>
            <person name="Greaves J."/>
            <person name="Bushell T.J."/>
            <person name="Chamberlain L.H."/>
        </authorList>
    </citation>
    <scope>SUBCELLULAR LOCATION</scope>
    <scope>MUTAGENESIS OF SER-330; 334-LEU-LEU-335; 340-THR--THR-342; 344-SER-SER-345; SER-356; ASN-357; PRO-358 AND THR-361</scope>
    <scope>MOTIF</scope>
</reference>
<reference key="7">
    <citation type="journal article" date="2017" name="Proc. Natl. Acad. Sci. U.S.A.">
        <title>Molecular basis of fatty acid selectivity in the zDHHC family of S-acyltransferases revealed by click chemistry.</title>
        <authorList>
            <person name="Greaves J."/>
            <person name="Munro K.R."/>
            <person name="Davidson S.C."/>
            <person name="Riviere M."/>
            <person name="Wojno J."/>
            <person name="Smith T.K."/>
            <person name="Tomkinson N.C."/>
            <person name="Chamberlain L.H."/>
        </authorList>
    </citation>
    <scope>FUNCTION</scope>
    <scope>CATALYTIC ACTIVITY</scope>
    <scope>SUBSTRATE SPECIFICITY</scope>
    <scope>MUTAGENESIS OF CYS-156</scope>
    <scope>ACTIVE SITE</scope>
</reference>
<name>ZDHC2_MOUSE</name>
<organism>
    <name type="scientific">Mus musculus</name>
    <name type="common">Mouse</name>
    <dbReference type="NCBI Taxonomy" id="10090"/>
    <lineage>
        <taxon>Eukaryota</taxon>
        <taxon>Metazoa</taxon>
        <taxon>Chordata</taxon>
        <taxon>Craniata</taxon>
        <taxon>Vertebrata</taxon>
        <taxon>Euteleostomi</taxon>
        <taxon>Mammalia</taxon>
        <taxon>Eutheria</taxon>
        <taxon>Euarchontoglires</taxon>
        <taxon>Glires</taxon>
        <taxon>Rodentia</taxon>
        <taxon>Myomorpha</taxon>
        <taxon>Muroidea</taxon>
        <taxon>Muridae</taxon>
        <taxon>Murinae</taxon>
        <taxon>Mus</taxon>
        <taxon>Mus</taxon>
    </lineage>
</organism>
<keyword id="KW-0012">Acyltransferase</keyword>
<keyword id="KW-1003">Cell membrane</keyword>
<keyword id="KW-0256">Endoplasmic reticulum</keyword>
<keyword id="KW-0967">Endosome</keyword>
<keyword id="KW-0333">Golgi apparatus</keyword>
<keyword id="KW-0449">Lipoprotein</keyword>
<keyword id="KW-0472">Membrane</keyword>
<keyword id="KW-0564">Palmitate</keyword>
<keyword id="KW-1185">Reference proteome</keyword>
<keyword id="KW-0770">Synapse</keyword>
<keyword id="KW-0808">Transferase</keyword>
<keyword id="KW-0812">Transmembrane</keyword>
<keyword id="KW-1133">Transmembrane helix</keyword>
<dbReference type="EC" id="2.3.1.225" evidence="11"/>
<dbReference type="EC" id="2.3.1.-" evidence="15"/>
<dbReference type="EMBL" id="AK030662">
    <property type="protein sequence ID" value="BAC27068.1"/>
    <property type="molecule type" value="mRNA"/>
</dbReference>
<dbReference type="CCDS" id="CCDS22252.1"/>
<dbReference type="RefSeq" id="NP_848482.1">
    <property type="nucleotide sequence ID" value="NM_178395.4"/>
</dbReference>
<dbReference type="RefSeq" id="XP_006509548.1">
    <property type="nucleotide sequence ID" value="XM_006509485.5"/>
</dbReference>
<dbReference type="SMR" id="P59267"/>
<dbReference type="FunCoup" id="P59267">
    <property type="interactions" value="1749"/>
</dbReference>
<dbReference type="STRING" id="10090.ENSMUSP00000041727"/>
<dbReference type="iPTMnet" id="P59267"/>
<dbReference type="PhosphoSitePlus" id="P59267"/>
<dbReference type="PaxDb" id="10090-ENSMUSP00000041727"/>
<dbReference type="ProteomicsDB" id="302053"/>
<dbReference type="Antibodypedia" id="22244">
    <property type="antibodies" value="120 antibodies from 24 providers"/>
</dbReference>
<dbReference type="DNASU" id="70546"/>
<dbReference type="Ensembl" id="ENSMUST00000049389.11">
    <property type="protein sequence ID" value="ENSMUSP00000041727.5"/>
    <property type="gene ID" value="ENSMUSG00000039470.17"/>
</dbReference>
<dbReference type="Ensembl" id="ENSMUST00000128166.8">
    <property type="protein sequence ID" value="ENSMUSP00000123070.2"/>
    <property type="gene ID" value="ENSMUSG00000039470.17"/>
</dbReference>
<dbReference type="GeneID" id="70546"/>
<dbReference type="KEGG" id="mmu:70546"/>
<dbReference type="UCSC" id="uc009lmn.1">
    <property type="organism name" value="mouse"/>
</dbReference>
<dbReference type="AGR" id="MGI:1923452"/>
<dbReference type="CTD" id="51201"/>
<dbReference type="MGI" id="MGI:1923452">
    <property type="gene designation" value="Zdhhc2"/>
</dbReference>
<dbReference type="VEuPathDB" id="HostDB:ENSMUSG00000039470"/>
<dbReference type="eggNOG" id="KOG1315">
    <property type="taxonomic scope" value="Eukaryota"/>
</dbReference>
<dbReference type="GeneTree" id="ENSGT00940000153716"/>
<dbReference type="HOGENOM" id="CLU_027721_1_3_1"/>
<dbReference type="InParanoid" id="P59267"/>
<dbReference type="OMA" id="CFVVMHI"/>
<dbReference type="OrthoDB" id="9909019at2759"/>
<dbReference type="PhylomeDB" id="P59267"/>
<dbReference type="TreeFam" id="TF316044"/>
<dbReference type="Reactome" id="R-MMU-5683826">
    <property type="pathway name" value="Surfactant metabolism"/>
</dbReference>
<dbReference type="BioGRID-ORCS" id="70546">
    <property type="hits" value="3 hits in 81 CRISPR screens"/>
</dbReference>
<dbReference type="ChiTaRS" id="Zdhhc2">
    <property type="organism name" value="mouse"/>
</dbReference>
<dbReference type="PRO" id="PR:P59267"/>
<dbReference type="Proteomes" id="UP000000589">
    <property type="component" value="Chromosome 8"/>
</dbReference>
<dbReference type="RNAct" id="P59267">
    <property type="molecule type" value="protein"/>
</dbReference>
<dbReference type="Bgee" id="ENSMUSG00000039470">
    <property type="expression patterns" value="Expressed in cranial nerve and 275 other cell types or tissues"/>
</dbReference>
<dbReference type="GO" id="GO:0005789">
    <property type="term" value="C:endoplasmic reticulum membrane"/>
    <property type="evidence" value="ECO:0000250"/>
    <property type="project" value="UniProtKB"/>
</dbReference>
<dbReference type="GO" id="GO:0098978">
    <property type="term" value="C:glutamatergic synapse"/>
    <property type="evidence" value="ECO:0007669"/>
    <property type="project" value="Ensembl"/>
</dbReference>
<dbReference type="GO" id="GO:0005794">
    <property type="term" value="C:Golgi apparatus"/>
    <property type="evidence" value="ECO:0000250"/>
    <property type="project" value="UniProtKB"/>
</dbReference>
<dbReference type="GO" id="GO:0000139">
    <property type="term" value="C:Golgi membrane"/>
    <property type="evidence" value="ECO:0007669"/>
    <property type="project" value="UniProtKB-SubCell"/>
</dbReference>
<dbReference type="GO" id="GO:0005886">
    <property type="term" value="C:plasma membrane"/>
    <property type="evidence" value="ECO:0000314"/>
    <property type="project" value="UniProtKB"/>
</dbReference>
<dbReference type="GO" id="GO:0014069">
    <property type="term" value="C:postsynaptic density"/>
    <property type="evidence" value="ECO:0000250"/>
    <property type="project" value="UniProtKB"/>
</dbReference>
<dbReference type="GO" id="GO:0098837">
    <property type="term" value="C:postsynaptic recycling endosome"/>
    <property type="evidence" value="ECO:0000314"/>
    <property type="project" value="UniProtKB"/>
</dbReference>
<dbReference type="GO" id="GO:0098944">
    <property type="term" value="C:postsynaptic recycling endosome membrane"/>
    <property type="evidence" value="ECO:0007669"/>
    <property type="project" value="UniProtKB-SubCell"/>
</dbReference>
<dbReference type="GO" id="GO:0055038">
    <property type="term" value="C:recycling endosome membrane"/>
    <property type="evidence" value="ECO:0000314"/>
    <property type="project" value="MGI"/>
</dbReference>
<dbReference type="GO" id="GO:0016409">
    <property type="term" value="F:palmitoyltransferase activity"/>
    <property type="evidence" value="ECO:0000314"/>
    <property type="project" value="MGI"/>
</dbReference>
<dbReference type="GO" id="GO:0042803">
    <property type="term" value="F:protein homodimerization activity"/>
    <property type="evidence" value="ECO:0007669"/>
    <property type="project" value="Ensembl"/>
</dbReference>
<dbReference type="GO" id="GO:0019705">
    <property type="term" value="F:protein-cysteine S-myristoyltransferase activity"/>
    <property type="evidence" value="ECO:0000314"/>
    <property type="project" value="UniProtKB"/>
</dbReference>
<dbReference type="GO" id="GO:0019706">
    <property type="term" value="F:protein-cysteine S-palmitoyltransferase activity"/>
    <property type="evidence" value="ECO:0000314"/>
    <property type="project" value="UniProtKB"/>
</dbReference>
<dbReference type="GO" id="GO:0140439">
    <property type="term" value="F:protein-cysteine S-stearoyltransferase activity"/>
    <property type="evidence" value="ECO:0000314"/>
    <property type="project" value="UniProtKB"/>
</dbReference>
<dbReference type="GO" id="GO:0018230">
    <property type="term" value="P:peptidyl-L-cysteine S-palmitoylation"/>
    <property type="evidence" value="ECO:0000314"/>
    <property type="project" value="UniProtKB"/>
</dbReference>
<dbReference type="GO" id="GO:1904719">
    <property type="term" value="P:positive regulation of AMPA glutamate receptor clustering"/>
    <property type="evidence" value="ECO:0000250"/>
    <property type="project" value="UniProtKB"/>
</dbReference>
<dbReference type="GO" id="GO:1905751">
    <property type="term" value="P:positive regulation of endosome to plasma membrane protein transport"/>
    <property type="evidence" value="ECO:0000250"/>
    <property type="project" value="UniProtKB"/>
</dbReference>
<dbReference type="GO" id="GO:1900273">
    <property type="term" value="P:positive regulation of long-term synaptic potentiation"/>
    <property type="evidence" value="ECO:0000250"/>
    <property type="project" value="UniProtKB"/>
</dbReference>
<dbReference type="GO" id="GO:1903044">
    <property type="term" value="P:protein localization to membrane raft"/>
    <property type="evidence" value="ECO:0000315"/>
    <property type="project" value="UniProt"/>
</dbReference>
<dbReference type="GO" id="GO:0072659">
    <property type="term" value="P:protein localization to plasma membrane"/>
    <property type="evidence" value="ECO:0000315"/>
    <property type="project" value="UniProtKB"/>
</dbReference>
<dbReference type="GO" id="GO:1903539">
    <property type="term" value="P:protein localization to postsynaptic membrane"/>
    <property type="evidence" value="ECO:0000250"/>
    <property type="project" value="UniProtKB"/>
</dbReference>
<dbReference type="GO" id="GO:0022407">
    <property type="term" value="P:regulation of cell-cell adhesion"/>
    <property type="evidence" value="ECO:0000250"/>
    <property type="project" value="UniProtKB"/>
</dbReference>
<dbReference type="GO" id="GO:0048168">
    <property type="term" value="P:regulation of neuronal synaptic plasticity"/>
    <property type="evidence" value="ECO:0000250"/>
    <property type="project" value="UniProtKB"/>
</dbReference>
<dbReference type="GO" id="GO:0150054">
    <property type="term" value="P:regulation of postsynaptic neurotransmitter receptor diffusion trapping"/>
    <property type="evidence" value="ECO:0007669"/>
    <property type="project" value="Ensembl"/>
</dbReference>
<dbReference type="GO" id="GO:0042176">
    <property type="term" value="P:regulation of protein catabolic process"/>
    <property type="evidence" value="ECO:0000250"/>
    <property type="project" value="UniProtKB"/>
</dbReference>
<dbReference type="GO" id="GO:0007416">
    <property type="term" value="P:synapse assembly"/>
    <property type="evidence" value="ECO:0000315"/>
    <property type="project" value="UniProt"/>
</dbReference>
<dbReference type="InterPro" id="IPR001594">
    <property type="entry name" value="Palmitoyltrfase_DHHC"/>
</dbReference>
<dbReference type="InterPro" id="IPR039859">
    <property type="entry name" value="PFA4/ZDH16/20/ERF2-like"/>
</dbReference>
<dbReference type="PANTHER" id="PTHR12246">
    <property type="entry name" value="PALMITOYLTRANSFERASE ZDHHC16"/>
    <property type="match status" value="1"/>
</dbReference>
<dbReference type="Pfam" id="PF01529">
    <property type="entry name" value="DHHC"/>
    <property type="match status" value="1"/>
</dbReference>
<dbReference type="PROSITE" id="PS50216">
    <property type="entry name" value="DHHC"/>
    <property type="match status" value="1"/>
</dbReference>
<protein>
    <recommendedName>
        <fullName evidence="13">Palmitoyltransferase ZDHHC2</fullName>
        <ecNumber evidence="11">2.3.1.225</ecNumber>
    </recommendedName>
    <alternativeName>
        <fullName evidence="15">Acyltransferase ZDHHC2</fullName>
        <ecNumber evidence="15">2.3.1.-</ecNumber>
    </alternativeName>
    <alternativeName>
        <fullName evidence="16">Zinc finger DHHC domain-containing protein 2</fullName>
        <shortName>DHHC-2</shortName>
    </alternativeName>
</protein>
<accession>P59267</accession>
<proteinExistence type="evidence at protein level"/>